<accession>G7NY55</accession>
<accession>Q95JY4</accession>
<feature type="chain" id="PRO_0000416059" description="Protein TOPAZ1">
    <location>
        <begin position="1"/>
        <end position="1687"/>
    </location>
</feature>
<feature type="region of interest" description="Disordered" evidence="2">
    <location>
        <begin position="1"/>
        <end position="131"/>
    </location>
</feature>
<feature type="region of interest" description="Disordered" evidence="2">
    <location>
        <begin position="319"/>
        <end position="339"/>
    </location>
</feature>
<feature type="region of interest" description="Disordered" evidence="2">
    <location>
        <begin position="596"/>
        <end position="632"/>
    </location>
</feature>
<feature type="region of interest" description="Disordered" evidence="2">
    <location>
        <begin position="880"/>
        <end position="916"/>
    </location>
</feature>
<feature type="compositionally biased region" description="Gly residues" evidence="2">
    <location>
        <begin position="31"/>
        <end position="41"/>
    </location>
</feature>
<feature type="compositionally biased region" description="Basic and acidic residues" evidence="2">
    <location>
        <begin position="80"/>
        <end position="113"/>
    </location>
</feature>
<feature type="compositionally biased region" description="Polar residues" evidence="2">
    <location>
        <begin position="598"/>
        <end position="622"/>
    </location>
</feature>
<feature type="compositionally biased region" description="Basic and acidic residues" evidence="2">
    <location>
        <begin position="897"/>
        <end position="916"/>
    </location>
</feature>
<feature type="sequence conflict" description="In Ref. 2; BAB62988." evidence="3" ref="2">
    <original>F</original>
    <variation>L</variation>
    <location>
        <position position="105"/>
    </location>
</feature>
<feature type="sequence conflict" description="In Ref. 2; BAB62988." evidence="3" ref="2">
    <original>F</original>
    <variation>S</variation>
    <location>
        <position position="219"/>
    </location>
</feature>
<feature type="sequence conflict" description="In Ref. 2; BAB62988." evidence="3" ref="2">
    <original>M</original>
    <variation>I</variation>
    <location>
        <position position="285"/>
    </location>
</feature>
<feature type="sequence conflict" description="In Ref. 2; BAB62988." evidence="3" ref="2">
    <original>RKE</original>
    <variation>KKK</variation>
    <location>
        <begin position="694"/>
        <end position="696"/>
    </location>
</feature>
<gene>
    <name type="primary">TOPAZ1</name>
    <name type="ORF">QtsA-12362</name>
</gene>
<keyword id="KW-0963">Cytoplasm</keyword>
<keyword id="KW-0221">Differentiation</keyword>
<keyword id="KW-1185">Reference proteome</keyword>
<keyword id="KW-0744">Spermatogenesis</keyword>
<evidence type="ECO:0000250" key="1">
    <source>
        <dbReference type="UniProtKB" id="E5FYH1"/>
    </source>
</evidence>
<evidence type="ECO:0000256" key="2">
    <source>
        <dbReference type="SAM" id="MobiDB-lite"/>
    </source>
</evidence>
<evidence type="ECO:0000305" key="3"/>
<reference key="1">
    <citation type="journal article" date="2011" name="Nat. Biotechnol.">
        <title>Genome sequencing and comparison of two nonhuman primate animal models, the cynomolgus and Chinese rhesus macaques.</title>
        <authorList>
            <person name="Yan G."/>
            <person name="Zhang G."/>
            <person name="Fang X."/>
            <person name="Zhang Y."/>
            <person name="Li C."/>
            <person name="Ling F."/>
            <person name="Cooper D.N."/>
            <person name="Li Q."/>
            <person name="Li Y."/>
            <person name="van Gool A.J."/>
            <person name="Du H."/>
            <person name="Chen J."/>
            <person name="Chen R."/>
            <person name="Zhang P."/>
            <person name="Huang Z."/>
            <person name="Thompson J.R."/>
            <person name="Meng Y."/>
            <person name="Bai Y."/>
            <person name="Wang J."/>
            <person name="Zhuo M."/>
            <person name="Wang T."/>
            <person name="Huang Y."/>
            <person name="Wei L."/>
            <person name="Li J."/>
            <person name="Wang Z."/>
            <person name="Hu H."/>
            <person name="Yang P."/>
            <person name="Le L."/>
            <person name="Stenson P.D."/>
            <person name="Li B."/>
            <person name="Liu X."/>
            <person name="Ball E.V."/>
            <person name="An N."/>
            <person name="Huang Q."/>
            <person name="Zhang Y."/>
            <person name="Fan W."/>
            <person name="Zhang X."/>
            <person name="Li Y."/>
            <person name="Wang W."/>
            <person name="Katze M.G."/>
            <person name="Su B."/>
            <person name="Nielsen R."/>
            <person name="Yang H."/>
            <person name="Wang J."/>
            <person name="Wang X."/>
            <person name="Wang J."/>
        </authorList>
    </citation>
    <scope>NUCLEOTIDE SEQUENCE [LARGE SCALE GENOMIC DNA]</scope>
</reference>
<reference key="2">
    <citation type="journal article" date="2002" name="BMC Genomics">
        <title>Cynomolgus monkey testicular cDNAs for discovery of novel human genes in the human genome sequence.</title>
        <authorList>
            <person name="Osada N."/>
            <person name="Hida M."/>
            <person name="Kusuda J."/>
            <person name="Tanuma R."/>
            <person name="Hirata M."/>
            <person name="Suto Y."/>
            <person name="Hirai M."/>
            <person name="Terao K."/>
            <person name="Sugano S."/>
            <person name="Hashimoto K."/>
        </authorList>
    </citation>
    <scope>NUCLEOTIDE SEQUENCE [LARGE SCALE MRNA] OF 1-696</scope>
    <source>
        <tissue>Testis</tissue>
    </source>
</reference>
<dbReference type="EMBL" id="CM001277">
    <property type="protein sequence ID" value="EHH51375.1"/>
    <property type="molecule type" value="Genomic_DNA"/>
</dbReference>
<dbReference type="EMBL" id="AB070043">
    <property type="protein sequence ID" value="BAB62988.1"/>
    <property type="status" value="ALT_FRAME"/>
    <property type="molecule type" value="mRNA"/>
</dbReference>
<dbReference type="STRING" id="9541.ENSMFAP00000006596"/>
<dbReference type="eggNOG" id="ENOG502QPIV">
    <property type="taxonomic scope" value="Eukaryota"/>
</dbReference>
<dbReference type="Proteomes" id="UP000009130">
    <property type="component" value="Chromosome 2"/>
</dbReference>
<dbReference type="Proteomes" id="UP000233100">
    <property type="component" value="Unplaced"/>
</dbReference>
<dbReference type="GO" id="GO:0005829">
    <property type="term" value="C:cytosol"/>
    <property type="evidence" value="ECO:0007669"/>
    <property type="project" value="UniProtKB-SubCell"/>
</dbReference>
<dbReference type="GO" id="GO:0030154">
    <property type="term" value="P:cell differentiation"/>
    <property type="evidence" value="ECO:0007669"/>
    <property type="project" value="UniProtKB-KW"/>
</dbReference>
<dbReference type="GO" id="GO:0048137">
    <property type="term" value="P:spermatocyte division"/>
    <property type="evidence" value="ECO:0007669"/>
    <property type="project" value="TreeGrafter"/>
</dbReference>
<dbReference type="InterPro" id="IPR038952">
    <property type="entry name" value="TOPAZ1"/>
</dbReference>
<dbReference type="InterPro" id="IPR029435">
    <property type="entry name" value="TOPAZ1_dom"/>
</dbReference>
<dbReference type="PANTHER" id="PTHR35671">
    <property type="entry name" value="PROTEIN TOPAZ1"/>
    <property type="match status" value="1"/>
</dbReference>
<dbReference type="PANTHER" id="PTHR35671:SF1">
    <property type="entry name" value="PROTEIN TOPAZ1"/>
    <property type="match status" value="1"/>
</dbReference>
<dbReference type="Pfam" id="PF14669">
    <property type="entry name" value="Asp_Glu_race_2"/>
    <property type="match status" value="1"/>
</dbReference>
<name>TOPZ1_MACFA</name>
<protein>
    <recommendedName>
        <fullName evidence="1">Protein TOPAZ1</fullName>
    </recommendedName>
    <alternativeName>
        <fullName evidence="1">Testis- and ovary-specific PAZ domain-containing protein 1</fullName>
    </alternativeName>
</protein>
<comment type="function">
    <text evidence="1">Important for normal spermatogenesis and male fertility. Specifically required for progression to the post-meiotic stages of spermatocyte development. Seems to be necessary for normal expression levels of a number of testis-expressed gene transcripts, although its role in this process is unclear.</text>
</comment>
<comment type="subcellular location">
    <subcellularLocation>
        <location evidence="1">Cytoplasm</location>
        <location evidence="1">Cytosol</location>
    </subcellularLocation>
</comment>
<comment type="sequence caution" evidence="3">
    <conflict type="frameshift">
        <sequence resource="EMBL-CDS" id="BAB62988"/>
    </conflict>
</comment>
<organism>
    <name type="scientific">Macaca fascicularis</name>
    <name type="common">Crab-eating macaque</name>
    <name type="synonym">Cynomolgus monkey</name>
    <dbReference type="NCBI Taxonomy" id="9541"/>
    <lineage>
        <taxon>Eukaryota</taxon>
        <taxon>Metazoa</taxon>
        <taxon>Chordata</taxon>
        <taxon>Craniata</taxon>
        <taxon>Vertebrata</taxon>
        <taxon>Euteleostomi</taxon>
        <taxon>Mammalia</taxon>
        <taxon>Eutheria</taxon>
        <taxon>Euarchontoglires</taxon>
        <taxon>Primates</taxon>
        <taxon>Haplorrhini</taxon>
        <taxon>Catarrhini</taxon>
        <taxon>Cercopithecidae</taxon>
        <taxon>Cercopithecinae</taxon>
        <taxon>Macaca</taxon>
    </lineage>
</organism>
<proteinExistence type="evidence at transcript level"/>
<sequence length="1687" mass="190437">MRRPPPLGPTTASGPEGNVRNLRKRQAPGPGAAGGCGPEAGGRGENRQKRRMVARATPGRGEVKSDKSVAASGAGKAARRRVEGRRGQVSPSDRRGLEAAKEAEFPLQTERHTKEKRKVTEASSDDPQPGFDLVRKESLTSSESFQTVECLRSLGKEGIVEGIKRRIRNKKLKSLENPPLKITENEATQNIKVEFQDELYKNTLKYSCNILSPEVENNFVFKLRDCNCFPHSKDCNDENNLPYEPDGGCMHVAENFSKKENFRSLAEKSDTNNIPQLLQTEENVMGVNKLLPEESDLYQSKINGLLPCLQREKNKYSIEESSVGRKPRKRMKLSEKADETVTQMNFSNEYNKSELMLQENQMIADGKEAEAKSPLNVLRKVSHNTVSLMDHLLSVPEMVEKETSSEHHVNAVFQKTIEPLLKEETENASEPLGYENMALKEDFKSKSCIGKSPEYHIERRSSREDLRSDSEELKLSCQRTIPMTGKRTWPYYSCARISAWCWKKASLPESSYFLPGSQKSCKKVDVPKHQTNKTHLTDSKLLLQSSLTETNTESSSKEKLDSNLNCLFSVSAVEHTLMVIKEPIIKDDKKIKSEELSRSGSEVISNTTEDTQLTSDTQSLTGNKKRDRGNLTKLNLTAASKDGQEANNSTGKTIHRKACVAKQTFVVPDLVKILNTGRLTNFKIPLLKNKTKKRKEVNAKSSEREGYSPLELLDNLSGADTRQNRSKENVSMTMLGPQTLSIQNSVTPVQASSDSFYNKNSCSISPSFTKHGNSSKPSNHFSEPGNIVSNKEVASLTVENNAFSCDPGYVEKSPSFCCNKQETFRPVSSEVRGRKITKNFSEVGFPDILKAYEDDVLLIDVIQDDPDLFGVSNEGELSFTSEVPRISQEPNVPGEHQSTDSKYVETPVKKEPSDDLRELPVLDCGPIKPDICASNSAASEIKHDPKDANTSLGEVANETSENETLGDFSEQIKGSDLDEKHRFTDKVITKEEKENIYEVRKSKDSRNADIMVGECQFAAPVPKPLCLLVPPLNLSGHQEDTILNTWMNDFRFLGKHSVLKLQNPETCEIFKREKNVGVFQKSLGLMIPYKYCKFHFNTLRGCERPLCKFAHVPEQGDEKVCMDVFKKYININELCLLQRAVNVFMEYYRKFPPGIYFDLQVLNDLLNSLLKHCLLKEVFQIVNLSIMVKMLPSLKILLNIFEHVATMKLRNAVPALIDIFCKLVEAGMVLDPEHFNYIVKLLYQVQASKQEITAVLEMKSRLQMRQFKKNWKCDLDSALNKLEHCKEKGDWTKLGKLYINVKMGCEKFADFQTFCACIAETLTKNCEDERPDTPFCEFAETVSKDPQNSKVDKGVLGRIGISAMYFYHKLLQWSKGRKVLDKLYELKIHFASLKGLIGPEKLASRCQIVNVAAEIFLKSGSLDGALWVMRESEWIIDTPLWPCDRLDVLNRHNLLCTIAHETLAKSLYRQTFEVLQNLPGFQNSQETVEVSQYSLLFNKLLGSCIESNSLGMSSSVAEFMISKSIPIDFSFLRRLITSLGRSRLWLKARAHYKSALSLGCYPPLEGNLYRKLLLIPSYLSEIEMLLAIEIFMVSNASSIQSPGTSTQILQIVLKRCEDNQSRSNDDYQAAVERLIMAARISDPKLFVKHMTVNVNKEQVYSLEHCSALKWLKENMKWAGKVWLFSNH</sequence>